<evidence type="ECO:0000255" key="1">
    <source>
        <dbReference type="HAMAP-Rule" id="MF_00409"/>
    </source>
</evidence>
<proteinExistence type="inferred from homology"/>
<accession>A1VZF9</accession>
<protein>
    <recommendedName>
        <fullName evidence="1">Tetraacyldisaccharide 4'-kinase</fullName>
        <ecNumber evidence="1">2.7.1.130</ecNumber>
    </recommendedName>
    <alternativeName>
        <fullName evidence="1">Lipid A 4'-kinase</fullName>
    </alternativeName>
</protein>
<name>LPXK_CAMJJ</name>
<sequence length="308" mass="36186">MSEEKNYELWLDNYFFKPNFWQKCLTFVLFPLSVLYAFFAILNTFFRKKIVFKKPVISVGNLSFGGNGKTPLCKAIAREFDGVFIVLRGYKRKSKGLFVVKNQNEILCTLAQSGDEAMEYAFEENIKGVIVSEDRVKGIEKAFELGAKIVVLDDAFSKFHIKKFDILLESKIKPYFNFTLPSGAYRLPKIYEKRADFIALEGRDFVRYSFVKENPKAVLVTAIAKPFRLYEHFIKARACYFFKDHYEFKKEELENLLKKHNCDTLMLTFKDFVKVKDFGFKCQIIELNIELKDSLREKIKTYIKEFEQ</sequence>
<gene>
    <name evidence="1" type="primary">lpxK</name>
    <name type="ordered locus">CJJ81176_0832</name>
</gene>
<reference key="1">
    <citation type="submission" date="2006-12" db="EMBL/GenBank/DDBJ databases">
        <authorList>
            <person name="Fouts D.E."/>
            <person name="Nelson K.E."/>
            <person name="Sebastian Y."/>
        </authorList>
    </citation>
    <scope>NUCLEOTIDE SEQUENCE [LARGE SCALE GENOMIC DNA]</scope>
    <source>
        <strain>81-176</strain>
    </source>
</reference>
<keyword id="KW-0067">ATP-binding</keyword>
<keyword id="KW-0418">Kinase</keyword>
<keyword id="KW-0441">Lipid A biosynthesis</keyword>
<keyword id="KW-0444">Lipid biosynthesis</keyword>
<keyword id="KW-0443">Lipid metabolism</keyword>
<keyword id="KW-0547">Nucleotide-binding</keyword>
<keyword id="KW-0808">Transferase</keyword>
<comment type="function">
    <text evidence="1">Transfers the gamma-phosphate of ATP to the 4'-position of a tetraacyldisaccharide 1-phosphate intermediate (termed DS-1-P) to form tetraacyldisaccharide 1,4'-bis-phosphate (lipid IVA).</text>
</comment>
<comment type="catalytic activity">
    <reaction evidence="1">
        <text>a lipid A disaccharide + ATP = a lipid IVA + ADP + H(+)</text>
        <dbReference type="Rhea" id="RHEA:67840"/>
        <dbReference type="ChEBI" id="CHEBI:15378"/>
        <dbReference type="ChEBI" id="CHEBI:30616"/>
        <dbReference type="ChEBI" id="CHEBI:176343"/>
        <dbReference type="ChEBI" id="CHEBI:176425"/>
        <dbReference type="ChEBI" id="CHEBI:456216"/>
        <dbReference type="EC" id="2.7.1.130"/>
    </reaction>
</comment>
<comment type="pathway">
    <text evidence="1">Glycolipid biosynthesis; lipid IV(A) biosynthesis; lipid IV(A) from (3R)-3-hydroxytetradecanoyl-[acyl-carrier-protein] and UDP-N-acetyl-alpha-D-glucosamine: step 6/6.</text>
</comment>
<comment type="similarity">
    <text evidence="1">Belongs to the LpxK family.</text>
</comment>
<organism>
    <name type="scientific">Campylobacter jejuni subsp. jejuni serotype O:23/36 (strain 81-176)</name>
    <dbReference type="NCBI Taxonomy" id="354242"/>
    <lineage>
        <taxon>Bacteria</taxon>
        <taxon>Pseudomonadati</taxon>
        <taxon>Campylobacterota</taxon>
        <taxon>Epsilonproteobacteria</taxon>
        <taxon>Campylobacterales</taxon>
        <taxon>Campylobacteraceae</taxon>
        <taxon>Campylobacter</taxon>
    </lineage>
</organism>
<dbReference type="EC" id="2.7.1.130" evidence="1"/>
<dbReference type="EMBL" id="CP000538">
    <property type="protein sequence ID" value="EAQ72377.1"/>
    <property type="molecule type" value="Genomic_DNA"/>
</dbReference>
<dbReference type="RefSeq" id="WP_011812737.1">
    <property type="nucleotide sequence ID" value="NC_008787.1"/>
</dbReference>
<dbReference type="SMR" id="A1VZF9"/>
<dbReference type="KEGG" id="cjj:CJJ81176_0832"/>
<dbReference type="eggNOG" id="COG1663">
    <property type="taxonomic scope" value="Bacteria"/>
</dbReference>
<dbReference type="HOGENOM" id="CLU_038816_1_0_7"/>
<dbReference type="UniPathway" id="UPA00359">
    <property type="reaction ID" value="UER00482"/>
</dbReference>
<dbReference type="Proteomes" id="UP000000646">
    <property type="component" value="Chromosome"/>
</dbReference>
<dbReference type="GO" id="GO:0005886">
    <property type="term" value="C:plasma membrane"/>
    <property type="evidence" value="ECO:0007669"/>
    <property type="project" value="TreeGrafter"/>
</dbReference>
<dbReference type="GO" id="GO:0005524">
    <property type="term" value="F:ATP binding"/>
    <property type="evidence" value="ECO:0007669"/>
    <property type="project" value="UniProtKB-UniRule"/>
</dbReference>
<dbReference type="GO" id="GO:0009029">
    <property type="term" value="F:tetraacyldisaccharide 4'-kinase activity"/>
    <property type="evidence" value="ECO:0007669"/>
    <property type="project" value="UniProtKB-UniRule"/>
</dbReference>
<dbReference type="GO" id="GO:0009245">
    <property type="term" value="P:lipid A biosynthetic process"/>
    <property type="evidence" value="ECO:0007669"/>
    <property type="project" value="UniProtKB-UniRule"/>
</dbReference>
<dbReference type="GO" id="GO:0009244">
    <property type="term" value="P:lipopolysaccharide core region biosynthetic process"/>
    <property type="evidence" value="ECO:0007669"/>
    <property type="project" value="TreeGrafter"/>
</dbReference>
<dbReference type="HAMAP" id="MF_00409">
    <property type="entry name" value="LpxK"/>
    <property type="match status" value="1"/>
</dbReference>
<dbReference type="InterPro" id="IPR003758">
    <property type="entry name" value="LpxK"/>
</dbReference>
<dbReference type="NCBIfam" id="NF001892">
    <property type="entry name" value="PRK00652.1-5"/>
    <property type="match status" value="1"/>
</dbReference>
<dbReference type="PANTHER" id="PTHR42724">
    <property type="entry name" value="TETRAACYLDISACCHARIDE 4'-KINASE"/>
    <property type="match status" value="1"/>
</dbReference>
<dbReference type="PANTHER" id="PTHR42724:SF1">
    <property type="entry name" value="TETRAACYLDISACCHARIDE 4'-KINASE, MITOCHONDRIAL-RELATED"/>
    <property type="match status" value="1"/>
</dbReference>
<dbReference type="Pfam" id="PF02606">
    <property type="entry name" value="LpxK"/>
    <property type="match status" value="2"/>
</dbReference>
<feature type="chain" id="PRO_0000291202" description="Tetraacyldisaccharide 4'-kinase">
    <location>
        <begin position="1"/>
        <end position="308"/>
    </location>
</feature>
<feature type="binding site" evidence="1">
    <location>
        <begin position="63"/>
        <end position="70"/>
    </location>
    <ligand>
        <name>ATP</name>
        <dbReference type="ChEBI" id="CHEBI:30616"/>
    </ligand>
</feature>